<dbReference type="EC" id="3.5.4.16"/>
<dbReference type="EMBL" id="AE004439">
    <property type="protein sequence ID" value="AAK02777.1"/>
    <property type="molecule type" value="Genomic_DNA"/>
</dbReference>
<dbReference type="RefSeq" id="WP_005726594.1">
    <property type="nucleotide sequence ID" value="NC_002663.1"/>
</dbReference>
<dbReference type="SMR" id="P57865"/>
<dbReference type="STRING" id="272843.PM0693"/>
<dbReference type="EnsemblBacteria" id="AAK02777">
    <property type="protein sequence ID" value="AAK02777"/>
    <property type="gene ID" value="PM0693"/>
</dbReference>
<dbReference type="KEGG" id="pmu:PM0693"/>
<dbReference type="HOGENOM" id="CLU_049768_3_2_6"/>
<dbReference type="OrthoDB" id="9801207at2"/>
<dbReference type="UniPathway" id="UPA00848">
    <property type="reaction ID" value="UER00151"/>
</dbReference>
<dbReference type="Proteomes" id="UP000000809">
    <property type="component" value="Chromosome"/>
</dbReference>
<dbReference type="GO" id="GO:0005737">
    <property type="term" value="C:cytoplasm"/>
    <property type="evidence" value="ECO:0007669"/>
    <property type="project" value="TreeGrafter"/>
</dbReference>
<dbReference type="GO" id="GO:0005525">
    <property type="term" value="F:GTP binding"/>
    <property type="evidence" value="ECO:0007669"/>
    <property type="project" value="UniProtKB-KW"/>
</dbReference>
<dbReference type="GO" id="GO:0003934">
    <property type="term" value="F:GTP cyclohydrolase I activity"/>
    <property type="evidence" value="ECO:0007669"/>
    <property type="project" value="UniProtKB-UniRule"/>
</dbReference>
<dbReference type="GO" id="GO:0008270">
    <property type="term" value="F:zinc ion binding"/>
    <property type="evidence" value="ECO:0007669"/>
    <property type="project" value="UniProtKB-UniRule"/>
</dbReference>
<dbReference type="GO" id="GO:0006730">
    <property type="term" value="P:one-carbon metabolic process"/>
    <property type="evidence" value="ECO:0007669"/>
    <property type="project" value="UniProtKB-UniRule"/>
</dbReference>
<dbReference type="GO" id="GO:0006729">
    <property type="term" value="P:tetrahydrobiopterin biosynthetic process"/>
    <property type="evidence" value="ECO:0007669"/>
    <property type="project" value="TreeGrafter"/>
</dbReference>
<dbReference type="GO" id="GO:0046654">
    <property type="term" value="P:tetrahydrofolate biosynthetic process"/>
    <property type="evidence" value="ECO:0007669"/>
    <property type="project" value="UniProtKB-UniRule"/>
</dbReference>
<dbReference type="CDD" id="cd00642">
    <property type="entry name" value="GTP_cyclohydro1"/>
    <property type="match status" value="1"/>
</dbReference>
<dbReference type="FunFam" id="3.30.1130.10:FF:000001">
    <property type="entry name" value="GTP cyclohydrolase 1"/>
    <property type="match status" value="1"/>
</dbReference>
<dbReference type="Gene3D" id="1.10.286.10">
    <property type="match status" value="1"/>
</dbReference>
<dbReference type="Gene3D" id="3.30.1130.10">
    <property type="match status" value="1"/>
</dbReference>
<dbReference type="HAMAP" id="MF_00223">
    <property type="entry name" value="FolE"/>
    <property type="match status" value="1"/>
</dbReference>
<dbReference type="InterPro" id="IPR043133">
    <property type="entry name" value="GTP-CH-I_C/QueF"/>
</dbReference>
<dbReference type="InterPro" id="IPR043134">
    <property type="entry name" value="GTP-CH-I_N"/>
</dbReference>
<dbReference type="InterPro" id="IPR001474">
    <property type="entry name" value="GTP_CycHdrlase_I"/>
</dbReference>
<dbReference type="InterPro" id="IPR018234">
    <property type="entry name" value="GTP_CycHdrlase_I_CS"/>
</dbReference>
<dbReference type="InterPro" id="IPR020602">
    <property type="entry name" value="GTP_CycHdrlase_I_dom"/>
</dbReference>
<dbReference type="NCBIfam" id="TIGR00063">
    <property type="entry name" value="folE"/>
    <property type="match status" value="1"/>
</dbReference>
<dbReference type="NCBIfam" id="NF006824">
    <property type="entry name" value="PRK09347.1-1"/>
    <property type="match status" value="1"/>
</dbReference>
<dbReference type="NCBIfam" id="NF006826">
    <property type="entry name" value="PRK09347.1-3"/>
    <property type="match status" value="1"/>
</dbReference>
<dbReference type="PANTHER" id="PTHR11109:SF7">
    <property type="entry name" value="GTP CYCLOHYDROLASE 1"/>
    <property type="match status" value="1"/>
</dbReference>
<dbReference type="PANTHER" id="PTHR11109">
    <property type="entry name" value="GTP CYCLOHYDROLASE I"/>
    <property type="match status" value="1"/>
</dbReference>
<dbReference type="Pfam" id="PF01227">
    <property type="entry name" value="GTP_cyclohydroI"/>
    <property type="match status" value="1"/>
</dbReference>
<dbReference type="SUPFAM" id="SSF55620">
    <property type="entry name" value="Tetrahydrobiopterin biosynthesis enzymes-like"/>
    <property type="match status" value="1"/>
</dbReference>
<dbReference type="PROSITE" id="PS00859">
    <property type="entry name" value="GTP_CYCLOHYDROL_1_1"/>
    <property type="match status" value="1"/>
</dbReference>
<dbReference type="PROSITE" id="PS00860">
    <property type="entry name" value="GTP_CYCLOHYDROL_1_2"/>
    <property type="match status" value="1"/>
</dbReference>
<reference key="1">
    <citation type="journal article" date="2001" name="Proc. Natl. Acad. Sci. U.S.A.">
        <title>Complete genomic sequence of Pasteurella multocida Pm70.</title>
        <authorList>
            <person name="May B.J."/>
            <person name="Zhang Q."/>
            <person name="Li L.L."/>
            <person name="Paustian M.L."/>
            <person name="Whittam T.S."/>
            <person name="Kapur V."/>
        </authorList>
    </citation>
    <scope>NUCLEOTIDE SEQUENCE [LARGE SCALE GENOMIC DNA]</scope>
    <source>
        <strain>Pm70</strain>
    </source>
</reference>
<feature type="chain" id="PRO_0000119425" description="GTP cyclohydrolase 1">
    <location>
        <begin position="1"/>
        <end position="218"/>
    </location>
</feature>
<feature type="binding site" evidence="1">
    <location>
        <position position="109"/>
    </location>
    <ligand>
        <name>Zn(2+)</name>
        <dbReference type="ChEBI" id="CHEBI:29105"/>
    </ligand>
</feature>
<feature type="binding site" evidence="1">
    <location>
        <position position="112"/>
    </location>
    <ligand>
        <name>Zn(2+)</name>
        <dbReference type="ChEBI" id="CHEBI:29105"/>
    </ligand>
</feature>
<feature type="binding site" evidence="1">
    <location>
        <position position="180"/>
    </location>
    <ligand>
        <name>Zn(2+)</name>
        <dbReference type="ChEBI" id="CHEBI:29105"/>
    </ligand>
</feature>
<accession>P57865</accession>
<sequence>MNKISPEAEKVRNALLSKGIETPMITPEQDRDTRRAGIEQHMREVMKLIGLDLRDDSLEETPVRLAKMFVDEIFSGLDYANFPKITNIENRMKVSEMVLVNDVTLTSTCEHHFVTIDGMVSVAYYPKKWVIGLSKINRIVAFFAQRPQVQERLTEQILLAFQTILETDDVAVYVKATHFCVKCRGIKDTNSYTVTSAFGGVFLDDRETRKEFLTLINK</sequence>
<organism>
    <name type="scientific">Pasteurella multocida (strain Pm70)</name>
    <dbReference type="NCBI Taxonomy" id="272843"/>
    <lineage>
        <taxon>Bacteria</taxon>
        <taxon>Pseudomonadati</taxon>
        <taxon>Pseudomonadota</taxon>
        <taxon>Gammaproteobacteria</taxon>
        <taxon>Pasteurellales</taxon>
        <taxon>Pasteurellaceae</taxon>
        <taxon>Pasteurella</taxon>
    </lineage>
</organism>
<proteinExistence type="inferred from homology"/>
<comment type="catalytic activity">
    <reaction>
        <text>GTP + H2O = 7,8-dihydroneopterin 3'-triphosphate + formate + H(+)</text>
        <dbReference type="Rhea" id="RHEA:17473"/>
        <dbReference type="ChEBI" id="CHEBI:15377"/>
        <dbReference type="ChEBI" id="CHEBI:15378"/>
        <dbReference type="ChEBI" id="CHEBI:15740"/>
        <dbReference type="ChEBI" id="CHEBI:37565"/>
        <dbReference type="ChEBI" id="CHEBI:58462"/>
        <dbReference type="EC" id="3.5.4.16"/>
    </reaction>
</comment>
<comment type="pathway">
    <text>Cofactor biosynthesis; 7,8-dihydroneopterin triphosphate biosynthesis; 7,8-dihydroneopterin triphosphate from GTP: step 1/1.</text>
</comment>
<comment type="subunit">
    <text evidence="1">Toroid-shaped homodecamer, composed of two pentamers of five dimers.</text>
</comment>
<comment type="similarity">
    <text evidence="2">Belongs to the GTP cyclohydrolase I family.</text>
</comment>
<protein>
    <recommendedName>
        <fullName>GTP cyclohydrolase 1</fullName>
        <ecNumber>3.5.4.16</ecNumber>
    </recommendedName>
    <alternativeName>
        <fullName>GTP cyclohydrolase I</fullName>
        <shortName>GTP-CH-I</shortName>
    </alternativeName>
</protein>
<keyword id="KW-0342">GTP-binding</keyword>
<keyword id="KW-0378">Hydrolase</keyword>
<keyword id="KW-0479">Metal-binding</keyword>
<keyword id="KW-0547">Nucleotide-binding</keyword>
<keyword id="KW-0554">One-carbon metabolism</keyword>
<keyword id="KW-1185">Reference proteome</keyword>
<keyword id="KW-0862">Zinc</keyword>
<evidence type="ECO:0000250" key="1"/>
<evidence type="ECO:0000305" key="2"/>
<gene>
    <name type="primary">folE</name>
    <name type="ordered locus">PM0693</name>
</gene>
<name>GCH1_PASMU</name>